<name>NNAAH_MYCGE</name>
<proteinExistence type="inferred from homology"/>
<sequence length="350" mass="40217">MKQKIIIFGGSFDPIHNAHLYIAKHAIKKIKAQKLFFVPTYNGIFKNNFHASNKDRIAMLKLAIKSVNNALVSNFDIKTKNAFSINTVNHFKSCYPTSEIYFLIGSDKLNELEKWDHIQQLKDLCTFVCYERKPYPFNKKIANQFNVKYLAKCPLEIASSKLLNQPRKKLIPLAVLNYINTNHLYLIPTLKAMVDDKRFQHCLRVGKLAKQLAIANKLDAKRAFVAGAYHDLAKQLPVDQLVNIATSELKITNYPSWKVLHSYVGAYILKNWFGVKDKMIINAIKNHTIPPKQVSKLDMIVYLADKLEPNRKQEQWSGGIEIDQLVKLAKSNLKQAYLITLKYVQNLVKD</sequence>
<feature type="chain" id="PRO_0000210477" description="Probable nicotinate-nucleotide adenylyltransferase/Ap4A hydrolase">
    <location>
        <begin position="1"/>
        <end position="350"/>
    </location>
</feature>
<feature type="domain" description="HD" evidence="4">
    <location>
        <begin position="198"/>
        <end position="310"/>
    </location>
</feature>
<feature type="region of interest" description="NaMN adenylyltransferase" evidence="6">
    <location>
        <begin position="1"/>
        <end position="187"/>
    </location>
</feature>
<feature type="region of interest" description="Ap4A hydrolase" evidence="6">
    <location>
        <begin position="196"/>
        <end position="350"/>
    </location>
</feature>
<feature type="binding site" evidence="3">
    <location>
        <position position="201"/>
    </location>
    <ligand>
        <name>ADP</name>
        <dbReference type="ChEBI" id="CHEBI:456216"/>
    </ligand>
</feature>
<feature type="binding site" evidence="3">
    <location>
        <position position="201"/>
    </location>
    <ligand>
        <name>Fe cation</name>
        <dbReference type="ChEBI" id="CHEBI:24875"/>
    </ligand>
</feature>
<feature type="binding site" evidence="3">
    <location>
        <position position="230"/>
    </location>
    <ligand>
        <name>Fe cation</name>
        <dbReference type="ChEBI" id="CHEBI:24875"/>
    </ligand>
</feature>
<feature type="binding site" evidence="3">
    <location>
        <begin position="231"/>
        <end position="234"/>
    </location>
    <ligand>
        <name>ADP</name>
        <dbReference type="ChEBI" id="CHEBI:456216"/>
    </ligand>
</feature>
<feature type="binding site" evidence="3">
    <location>
        <position position="231"/>
    </location>
    <ligand>
        <name>Fe cation</name>
        <dbReference type="ChEBI" id="CHEBI:24875"/>
    </ligand>
</feature>
<feature type="binding site" evidence="3">
    <location>
        <position position="261"/>
    </location>
    <ligand>
        <name>ADP</name>
        <dbReference type="ChEBI" id="CHEBI:456216"/>
    </ligand>
</feature>
<feature type="binding site" evidence="3">
    <location>
        <begin position="287"/>
        <end position="288"/>
    </location>
    <ligand>
        <name>ADP</name>
        <dbReference type="ChEBI" id="CHEBI:456216"/>
    </ligand>
</feature>
<feature type="binding site" evidence="3">
    <location>
        <position position="305"/>
    </location>
    <ligand>
        <name>ADP</name>
        <dbReference type="ChEBI" id="CHEBI:456216"/>
    </ligand>
</feature>
<feature type="binding site" evidence="3">
    <location>
        <position position="305"/>
    </location>
    <ligand>
        <name>Fe cation</name>
        <dbReference type="ChEBI" id="CHEBI:24875"/>
    </ligand>
</feature>
<feature type="binding site" evidence="3">
    <location>
        <position position="311"/>
    </location>
    <ligand>
        <name>ADP</name>
        <dbReference type="ChEBI" id="CHEBI:456216"/>
    </ligand>
</feature>
<organism>
    <name type="scientific">Mycoplasma genitalium (strain ATCC 33530 / DSM 19775 / NCTC 10195 / G37)</name>
    <name type="common">Mycoplasmoides genitalium</name>
    <dbReference type="NCBI Taxonomy" id="243273"/>
    <lineage>
        <taxon>Bacteria</taxon>
        <taxon>Bacillati</taxon>
        <taxon>Mycoplasmatota</taxon>
        <taxon>Mycoplasmoidales</taxon>
        <taxon>Mycoplasmoidaceae</taxon>
        <taxon>Mycoplasmoides</taxon>
    </lineage>
</organism>
<reference key="1">
    <citation type="journal article" date="1995" name="Science">
        <title>The minimal gene complement of Mycoplasma genitalium.</title>
        <authorList>
            <person name="Fraser C.M."/>
            <person name="Gocayne J.D."/>
            <person name="White O."/>
            <person name="Adams M.D."/>
            <person name="Clayton R.A."/>
            <person name="Fleischmann R.D."/>
            <person name="Bult C.J."/>
            <person name="Kerlavage A.R."/>
            <person name="Sutton G.G."/>
            <person name="Kelley J.M."/>
            <person name="Fritchman J.L."/>
            <person name="Weidman J.F."/>
            <person name="Small K.V."/>
            <person name="Sandusky M."/>
            <person name="Fuhrmann J.L."/>
            <person name="Nguyen D.T."/>
            <person name="Utterback T.R."/>
            <person name="Saudek D.M."/>
            <person name="Phillips C.A."/>
            <person name="Merrick J.M."/>
            <person name="Tomb J.-F."/>
            <person name="Dougherty B.A."/>
            <person name="Bott K.F."/>
            <person name="Hu P.-C."/>
            <person name="Lucier T.S."/>
            <person name="Peterson S.N."/>
            <person name="Smith H.O."/>
            <person name="Hutchison C.A. III"/>
            <person name="Venter J.C."/>
        </authorList>
    </citation>
    <scope>NUCLEOTIDE SEQUENCE [LARGE SCALE GENOMIC DNA]</scope>
    <source>
        <strain>ATCC 33530 / DSM 19775 / NCTC 10195 / G37</strain>
    </source>
</reference>
<reference key="2">
    <citation type="journal article" date="1993" name="J. Bacteriol.">
        <title>A survey of the Mycoplasma genitalium genome by using random sequencing.</title>
        <authorList>
            <person name="Peterson S.N."/>
            <person name="Hu P.-C."/>
            <person name="Bott K.F."/>
            <person name="Hutchison C.A. III"/>
        </authorList>
    </citation>
    <scope>NUCLEOTIDE SEQUENCE [GENOMIC DNA] OF 258-350</scope>
    <source>
        <strain>ATCC 33530 / DSM 19775 / NCTC 10195 / G37</strain>
    </source>
</reference>
<reference key="3">
    <citation type="journal article" date="2006" name="Proc. Natl. Acad. Sci. U.S.A.">
        <title>Essential genes of a minimal bacterium.</title>
        <authorList>
            <person name="Glass J.I."/>
            <person name="Assad-Garcia N."/>
            <person name="Alperovich N."/>
            <person name="Yooseph S."/>
            <person name="Lewis M.R."/>
            <person name="Maruf M."/>
            <person name="Hutchison C.A. III"/>
            <person name="Smith H.O."/>
            <person name="Venter J.C."/>
        </authorList>
    </citation>
    <scope>SEQUENCE REVISION</scope>
    <scope>DISRUPTION PHENOTYPE</scope>
    <source>
        <strain>ATCC 33530 / DSM 19775 / NCTC 10195 / G37</strain>
    </source>
</reference>
<dbReference type="EC" id="2.7.7.18" evidence="1"/>
<dbReference type="EC" id="3.6.1.41" evidence="2"/>
<dbReference type="EMBL" id="L43967">
    <property type="protein sequence ID" value="AAC71461.2"/>
    <property type="molecule type" value="Genomic_DNA"/>
</dbReference>
<dbReference type="EMBL" id="U01734">
    <property type="protein sequence ID" value="AAD10544.1"/>
    <property type="molecule type" value="Genomic_DNA"/>
</dbReference>
<dbReference type="PIR" id="E64226">
    <property type="entry name" value="E64226"/>
</dbReference>
<dbReference type="RefSeq" id="WP_010869387.1">
    <property type="nucleotide sequence ID" value="NC_000908.2"/>
</dbReference>
<dbReference type="SMR" id="P47482"/>
<dbReference type="FunCoup" id="P47482">
    <property type="interactions" value="159"/>
</dbReference>
<dbReference type="STRING" id="243273.MG_240"/>
<dbReference type="GeneID" id="88282386"/>
<dbReference type="KEGG" id="mge:MG_240"/>
<dbReference type="eggNOG" id="COG1057">
    <property type="taxonomic scope" value="Bacteria"/>
</dbReference>
<dbReference type="eggNOG" id="COG1713">
    <property type="taxonomic scope" value="Bacteria"/>
</dbReference>
<dbReference type="HOGENOM" id="CLU_050191_0_0_14"/>
<dbReference type="InParanoid" id="P47482"/>
<dbReference type="OrthoDB" id="5295945at2"/>
<dbReference type="UniPathway" id="UPA00253">
    <property type="reaction ID" value="UER00332"/>
</dbReference>
<dbReference type="Proteomes" id="UP000000807">
    <property type="component" value="Chromosome"/>
</dbReference>
<dbReference type="GO" id="GO:0005524">
    <property type="term" value="F:ATP binding"/>
    <property type="evidence" value="ECO:0007669"/>
    <property type="project" value="UniProtKB-KW"/>
</dbReference>
<dbReference type="GO" id="GO:0016787">
    <property type="term" value="F:hydrolase activity"/>
    <property type="evidence" value="ECO:0007669"/>
    <property type="project" value="UniProtKB-KW"/>
</dbReference>
<dbReference type="GO" id="GO:0046872">
    <property type="term" value="F:metal ion binding"/>
    <property type="evidence" value="ECO:0007669"/>
    <property type="project" value="UniProtKB-KW"/>
</dbReference>
<dbReference type="GO" id="GO:0004515">
    <property type="term" value="F:nicotinate-nucleotide adenylyltransferase activity"/>
    <property type="evidence" value="ECO:0007669"/>
    <property type="project" value="UniProtKB-UniRule"/>
</dbReference>
<dbReference type="GO" id="GO:0009435">
    <property type="term" value="P:NAD biosynthetic process"/>
    <property type="evidence" value="ECO:0007669"/>
    <property type="project" value="UniProtKB-UniRule"/>
</dbReference>
<dbReference type="CDD" id="cd00077">
    <property type="entry name" value="HDc"/>
    <property type="match status" value="1"/>
</dbReference>
<dbReference type="CDD" id="cd02165">
    <property type="entry name" value="NMNAT"/>
    <property type="match status" value="1"/>
</dbReference>
<dbReference type="Gene3D" id="3.40.50.620">
    <property type="entry name" value="HUPs"/>
    <property type="match status" value="1"/>
</dbReference>
<dbReference type="Gene3D" id="1.10.3210.10">
    <property type="entry name" value="Hypothetical protein af1432"/>
    <property type="match status" value="1"/>
</dbReference>
<dbReference type="HAMAP" id="MF_00244">
    <property type="entry name" value="NaMN_adenylyltr"/>
    <property type="match status" value="1"/>
</dbReference>
<dbReference type="InterPro" id="IPR004821">
    <property type="entry name" value="Cyt_trans-like"/>
</dbReference>
<dbReference type="InterPro" id="IPR051094">
    <property type="entry name" value="Diverse_Catalytic_Enzymes"/>
</dbReference>
<dbReference type="InterPro" id="IPR003607">
    <property type="entry name" value="HD/PDEase_dom"/>
</dbReference>
<dbReference type="InterPro" id="IPR006674">
    <property type="entry name" value="HD_domain"/>
</dbReference>
<dbReference type="InterPro" id="IPR005248">
    <property type="entry name" value="NadD/NMNAT"/>
</dbReference>
<dbReference type="InterPro" id="IPR014729">
    <property type="entry name" value="Rossmann-like_a/b/a_fold"/>
</dbReference>
<dbReference type="InterPro" id="IPR005249">
    <property type="entry name" value="YqeK"/>
</dbReference>
<dbReference type="NCBIfam" id="TIGR00488">
    <property type="entry name" value="bis(5'-nucleosyl)-tetraphosphatase (symmetrical) YqeK"/>
    <property type="match status" value="1"/>
</dbReference>
<dbReference type="NCBIfam" id="TIGR00125">
    <property type="entry name" value="cyt_tran_rel"/>
    <property type="match status" value="1"/>
</dbReference>
<dbReference type="NCBIfam" id="TIGR00482">
    <property type="entry name" value="nicotinate (nicotinamide) nucleotide adenylyltransferase"/>
    <property type="match status" value="1"/>
</dbReference>
<dbReference type="NCBIfam" id="NF005519">
    <property type="entry name" value="PRK07152.1"/>
    <property type="match status" value="1"/>
</dbReference>
<dbReference type="PANTHER" id="PTHR35795:SF1">
    <property type="entry name" value="BIS(5'-NUCLEOSYL)-TETRAPHOSPHATASE, SYMMETRICAL"/>
    <property type="match status" value="1"/>
</dbReference>
<dbReference type="PANTHER" id="PTHR35795">
    <property type="entry name" value="SLR1885 PROTEIN"/>
    <property type="match status" value="1"/>
</dbReference>
<dbReference type="Pfam" id="PF01467">
    <property type="entry name" value="CTP_transf_like"/>
    <property type="match status" value="1"/>
</dbReference>
<dbReference type="Pfam" id="PF01966">
    <property type="entry name" value="HD"/>
    <property type="match status" value="1"/>
</dbReference>
<dbReference type="SMART" id="SM00471">
    <property type="entry name" value="HDc"/>
    <property type="match status" value="1"/>
</dbReference>
<dbReference type="SUPFAM" id="SSF109604">
    <property type="entry name" value="HD-domain/PDEase-like"/>
    <property type="match status" value="1"/>
</dbReference>
<dbReference type="SUPFAM" id="SSF52374">
    <property type="entry name" value="Nucleotidylyl transferase"/>
    <property type="match status" value="1"/>
</dbReference>
<dbReference type="PROSITE" id="PS51831">
    <property type="entry name" value="HD"/>
    <property type="match status" value="1"/>
</dbReference>
<protein>
    <recommendedName>
        <fullName evidence="6">Probable nicotinate-nucleotide adenylyltransferase/Ap4A hydrolase</fullName>
    </recommendedName>
    <domain>
        <recommendedName>
            <fullName evidence="1">Nicotinate-nucleotide adenylyltransferase</fullName>
            <ecNumber evidence="1">2.7.7.18</ecNumber>
        </recommendedName>
        <alternativeName>
            <fullName evidence="1">Deamido-NAD(+) diphosphorylase</fullName>
        </alternativeName>
        <alternativeName>
            <fullName evidence="1">Deamido-NAD(+) pyrophosphorylase</fullName>
        </alternativeName>
        <alternativeName>
            <fullName evidence="1">Nicotinate mononucleotide adenylyltransferase</fullName>
            <shortName evidence="1">NaMN adenylyltransferase</shortName>
        </alternativeName>
    </domain>
    <domain>
        <recommendedName>
            <fullName evidence="2">Bis(5'-nucleosyl)-tetraphosphatase, symmetrical</fullName>
            <ecNumber evidence="2">3.6.1.41</ecNumber>
        </recommendedName>
        <alternativeName>
            <fullName evidence="2">Ap4A hydrolase</fullName>
        </alternativeName>
    </domain>
</protein>
<comment type="function">
    <text evidence="1">Catalyzes the reversible adenylation of nicotinate mononucleotide (NaMN) to nicotinic acid adenine dinucleotide (NaAD).</text>
</comment>
<comment type="function">
    <text evidence="2">Hydrolyzes diadenosine 5',5'''-P1,P4-tetraphosphate (Ap4A) to yield ADP.</text>
</comment>
<comment type="catalytic activity">
    <reaction evidence="1">
        <text>nicotinate beta-D-ribonucleotide + ATP + H(+) = deamido-NAD(+) + diphosphate</text>
        <dbReference type="Rhea" id="RHEA:22860"/>
        <dbReference type="ChEBI" id="CHEBI:15378"/>
        <dbReference type="ChEBI" id="CHEBI:30616"/>
        <dbReference type="ChEBI" id="CHEBI:33019"/>
        <dbReference type="ChEBI" id="CHEBI:57502"/>
        <dbReference type="ChEBI" id="CHEBI:58437"/>
        <dbReference type="EC" id="2.7.7.18"/>
    </reaction>
</comment>
<comment type="catalytic activity">
    <reaction evidence="2">
        <text>P(1),P(4)-bis(5'-adenosyl) tetraphosphate + H2O = 2 ADP + 2 H(+)</text>
        <dbReference type="Rhea" id="RHEA:24252"/>
        <dbReference type="ChEBI" id="CHEBI:15377"/>
        <dbReference type="ChEBI" id="CHEBI:15378"/>
        <dbReference type="ChEBI" id="CHEBI:58141"/>
        <dbReference type="ChEBI" id="CHEBI:456216"/>
        <dbReference type="EC" id="3.6.1.41"/>
    </reaction>
</comment>
<comment type="pathway">
    <text evidence="1">Cofactor biosynthesis; NAD(+) biosynthesis; deamido-NAD(+) from nicotinate D-ribonucleotide: step 1/1.</text>
</comment>
<comment type="disruption phenotype">
    <text evidence="5">Probably essential, it was not disrupted in a global transposon mutagenesis study.</text>
</comment>
<comment type="similarity">
    <text evidence="6">In the N-terminal section; belongs to the NadD family.</text>
</comment>
<comment type="similarity">
    <text evidence="6">In the C-terminal section; belongs to the Ap4A hydrolase YqeK family.</text>
</comment>
<accession>P47482</accession>
<evidence type="ECO:0000250" key="1">
    <source>
        <dbReference type="UniProtKB" id="P0A752"/>
    </source>
</evidence>
<evidence type="ECO:0000250" key="2">
    <source>
        <dbReference type="UniProtKB" id="Q2G297"/>
    </source>
</evidence>
<evidence type="ECO:0000250" key="3">
    <source>
        <dbReference type="UniProtKB" id="Q9KD90"/>
    </source>
</evidence>
<evidence type="ECO:0000255" key="4">
    <source>
        <dbReference type="PROSITE-ProRule" id="PRU01175"/>
    </source>
</evidence>
<evidence type="ECO:0000269" key="5">
    <source>
    </source>
</evidence>
<evidence type="ECO:0000305" key="6"/>
<gene>
    <name type="ordered locus">MG240</name>
</gene>
<keyword id="KW-0067">ATP-binding</keyword>
<keyword id="KW-0378">Hydrolase</keyword>
<keyword id="KW-0408">Iron</keyword>
<keyword id="KW-0479">Metal-binding</keyword>
<keyword id="KW-0511">Multifunctional enzyme</keyword>
<keyword id="KW-0520">NAD</keyword>
<keyword id="KW-0547">Nucleotide-binding</keyword>
<keyword id="KW-0548">Nucleotidyltransferase</keyword>
<keyword id="KW-0662">Pyridine nucleotide biosynthesis</keyword>
<keyword id="KW-1185">Reference proteome</keyword>
<keyword id="KW-0808">Transferase</keyword>